<comment type="function">
    <text evidence="1">Catalyzes the interconversion between ADP-D-glycero-beta-D-manno-heptose and ADP-L-glycero-beta-D-manno-heptose via an epimerization at carbon 6 of the heptose.</text>
</comment>
<comment type="catalytic activity">
    <reaction evidence="1">
        <text>ADP-D-glycero-beta-D-manno-heptose = ADP-L-glycero-beta-D-manno-heptose</text>
        <dbReference type="Rhea" id="RHEA:17577"/>
        <dbReference type="ChEBI" id="CHEBI:59967"/>
        <dbReference type="ChEBI" id="CHEBI:61506"/>
        <dbReference type="EC" id="5.1.3.20"/>
    </reaction>
</comment>
<comment type="cofactor">
    <cofactor evidence="1">
        <name>NADP(+)</name>
        <dbReference type="ChEBI" id="CHEBI:58349"/>
    </cofactor>
    <text evidence="1">Binds 1 NADP(+) per subunit.</text>
</comment>
<comment type="pathway">
    <text evidence="1">Nucleotide-sugar biosynthesis; ADP-L-glycero-beta-D-manno-heptose biosynthesis; ADP-L-glycero-beta-D-manno-heptose from D-glycero-beta-D-manno-heptose 7-phosphate: step 4/4.</text>
</comment>
<comment type="pathway">
    <text>Bacterial outer membrane biogenesis; LPS core biosynthesis.</text>
</comment>
<comment type="subunit">
    <text evidence="1">Homopentamer.</text>
</comment>
<comment type="domain">
    <text evidence="1">Contains a large N-terminal NADP-binding domain, and a smaller C-terminal substrate-binding domain.</text>
</comment>
<comment type="similarity">
    <text evidence="1">Belongs to the NAD(P)-dependent epimerase/dehydratase family. HldD subfamily.</text>
</comment>
<dbReference type="EC" id="5.1.3.20" evidence="1"/>
<dbReference type="EMBL" id="BX640413">
    <property type="protein sequence ID" value="CAE41257.1"/>
    <property type="molecule type" value="Genomic_DNA"/>
</dbReference>
<dbReference type="RefSeq" id="NP_879756.1">
    <property type="nucleotide sequence ID" value="NC_002929.2"/>
</dbReference>
<dbReference type="RefSeq" id="WP_003821513.1">
    <property type="nucleotide sequence ID" value="NZ_CP039022.1"/>
</dbReference>
<dbReference type="SMR" id="Q7VZF5"/>
<dbReference type="STRING" id="257313.BP0955"/>
<dbReference type="PaxDb" id="257313-BP0955"/>
<dbReference type="GeneID" id="69600881"/>
<dbReference type="KEGG" id="bpe:BP0955"/>
<dbReference type="PATRIC" id="fig|257313.5.peg.1019"/>
<dbReference type="eggNOG" id="COG0451">
    <property type="taxonomic scope" value="Bacteria"/>
</dbReference>
<dbReference type="HOGENOM" id="CLU_007383_1_3_4"/>
<dbReference type="UniPathway" id="UPA00356">
    <property type="reaction ID" value="UER00440"/>
</dbReference>
<dbReference type="UniPathway" id="UPA00958"/>
<dbReference type="Proteomes" id="UP000002676">
    <property type="component" value="Chromosome"/>
</dbReference>
<dbReference type="GO" id="GO:0008712">
    <property type="term" value="F:ADP-glyceromanno-heptose 6-epimerase activity"/>
    <property type="evidence" value="ECO:0007669"/>
    <property type="project" value="UniProtKB-UniRule"/>
</dbReference>
<dbReference type="GO" id="GO:0050661">
    <property type="term" value="F:NADP binding"/>
    <property type="evidence" value="ECO:0007669"/>
    <property type="project" value="InterPro"/>
</dbReference>
<dbReference type="GO" id="GO:0097171">
    <property type="term" value="P:ADP-L-glycero-beta-D-manno-heptose biosynthetic process"/>
    <property type="evidence" value="ECO:0007669"/>
    <property type="project" value="UniProtKB-UniPathway"/>
</dbReference>
<dbReference type="GO" id="GO:0009244">
    <property type="term" value="P:lipopolysaccharide core region biosynthetic process"/>
    <property type="evidence" value="ECO:0007669"/>
    <property type="project" value="UniProtKB-UniPathway"/>
</dbReference>
<dbReference type="CDD" id="cd05248">
    <property type="entry name" value="ADP_GME_SDR_e"/>
    <property type="match status" value="1"/>
</dbReference>
<dbReference type="Gene3D" id="3.40.50.720">
    <property type="entry name" value="NAD(P)-binding Rossmann-like Domain"/>
    <property type="match status" value="1"/>
</dbReference>
<dbReference type="Gene3D" id="3.90.25.10">
    <property type="entry name" value="UDP-galactose 4-epimerase, domain 1"/>
    <property type="match status" value="1"/>
</dbReference>
<dbReference type="HAMAP" id="MF_01601">
    <property type="entry name" value="Heptose_epimerase"/>
    <property type="match status" value="1"/>
</dbReference>
<dbReference type="InterPro" id="IPR001509">
    <property type="entry name" value="Epimerase_deHydtase"/>
</dbReference>
<dbReference type="InterPro" id="IPR011912">
    <property type="entry name" value="Heptose_epim"/>
</dbReference>
<dbReference type="InterPro" id="IPR036291">
    <property type="entry name" value="NAD(P)-bd_dom_sf"/>
</dbReference>
<dbReference type="NCBIfam" id="TIGR02197">
    <property type="entry name" value="heptose_epim"/>
    <property type="match status" value="1"/>
</dbReference>
<dbReference type="PANTHER" id="PTHR43103:SF3">
    <property type="entry name" value="ADP-L-GLYCERO-D-MANNO-HEPTOSE-6-EPIMERASE"/>
    <property type="match status" value="1"/>
</dbReference>
<dbReference type="PANTHER" id="PTHR43103">
    <property type="entry name" value="NUCLEOSIDE-DIPHOSPHATE-SUGAR EPIMERASE"/>
    <property type="match status" value="1"/>
</dbReference>
<dbReference type="Pfam" id="PF01370">
    <property type="entry name" value="Epimerase"/>
    <property type="match status" value="1"/>
</dbReference>
<dbReference type="SUPFAM" id="SSF51735">
    <property type="entry name" value="NAD(P)-binding Rossmann-fold domains"/>
    <property type="match status" value="1"/>
</dbReference>
<accession>Q7VZF5</accession>
<name>HLDD_BORPE</name>
<feature type="chain" id="PRO_0000205789" description="ADP-L-glycero-D-manno-heptose-6-epimerase">
    <location>
        <begin position="1"/>
        <end position="329"/>
    </location>
</feature>
<feature type="active site" description="Proton acceptor" evidence="1">
    <location>
        <position position="138"/>
    </location>
</feature>
<feature type="active site" description="Proton acceptor" evidence="1">
    <location>
        <position position="176"/>
    </location>
</feature>
<feature type="binding site" evidence="1">
    <location>
        <begin position="10"/>
        <end position="11"/>
    </location>
    <ligand>
        <name>NADP(+)</name>
        <dbReference type="ChEBI" id="CHEBI:58349"/>
    </ligand>
</feature>
<feature type="binding site" evidence="1">
    <location>
        <begin position="31"/>
        <end position="32"/>
    </location>
    <ligand>
        <name>NADP(+)</name>
        <dbReference type="ChEBI" id="CHEBI:58349"/>
    </ligand>
</feature>
<feature type="binding site" evidence="1">
    <location>
        <position position="38"/>
    </location>
    <ligand>
        <name>NADP(+)</name>
        <dbReference type="ChEBI" id="CHEBI:58349"/>
    </ligand>
</feature>
<feature type="binding site" evidence="1">
    <location>
        <position position="53"/>
    </location>
    <ligand>
        <name>NADP(+)</name>
        <dbReference type="ChEBI" id="CHEBI:58349"/>
    </ligand>
</feature>
<feature type="binding site" evidence="1">
    <location>
        <begin position="74"/>
        <end position="78"/>
    </location>
    <ligand>
        <name>NADP(+)</name>
        <dbReference type="ChEBI" id="CHEBI:58349"/>
    </ligand>
</feature>
<feature type="binding site" evidence="1">
    <location>
        <position position="91"/>
    </location>
    <ligand>
        <name>NADP(+)</name>
        <dbReference type="ChEBI" id="CHEBI:58349"/>
    </ligand>
</feature>
<feature type="binding site" evidence="1">
    <location>
        <position position="142"/>
    </location>
    <ligand>
        <name>NADP(+)</name>
        <dbReference type="ChEBI" id="CHEBI:58349"/>
    </ligand>
</feature>
<feature type="binding site" evidence="1">
    <location>
        <position position="167"/>
    </location>
    <ligand>
        <name>substrate</name>
    </ligand>
</feature>
<feature type="binding site" evidence="1">
    <location>
        <position position="168"/>
    </location>
    <ligand>
        <name>NADP(+)</name>
        <dbReference type="ChEBI" id="CHEBI:58349"/>
    </ligand>
</feature>
<feature type="binding site" evidence="1">
    <location>
        <position position="176"/>
    </location>
    <ligand>
        <name>NADP(+)</name>
        <dbReference type="ChEBI" id="CHEBI:58349"/>
    </ligand>
</feature>
<feature type="binding site" evidence="1">
    <location>
        <position position="178"/>
    </location>
    <ligand>
        <name>substrate</name>
    </ligand>
</feature>
<feature type="binding site" evidence="1">
    <location>
        <position position="185"/>
    </location>
    <ligand>
        <name>substrate</name>
    </ligand>
</feature>
<feature type="binding site" evidence="1">
    <location>
        <begin position="199"/>
        <end position="202"/>
    </location>
    <ligand>
        <name>substrate</name>
    </ligand>
</feature>
<feature type="binding site" evidence="1">
    <location>
        <position position="212"/>
    </location>
    <ligand>
        <name>substrate</name>
    </ligand>
</feature>
<feature type="binding site" evidence="1">
    <location>
        <position position="291"/>
    </location>
    <ligand>
        <name>substrate</name>
    </ligand>
</feature>
<proteinExistence type="inferred from homology"/>
<organism>
    <name type="scientific">Bordetella pertussis (strain Tohama I / ATCC BAA-589 / NCTC 13251)</name>
    <dbReference type="NCBI Taxonomy" id="257313"/>
    <lineage>
        <taxon>Bacteria</taxon>
        <taxon>Pseudomonadati</taxon>
        <taxon>Pseudomonadota</taxon>
        <taxon>Betaproteobacteria</taxon>
        <taxon>Burkholderiales</taxon>
        <taxon>Alcaligenaceae</taxon>
        <taxon>Bordetella</taxon>
    </lineage>
</organism>
<evidence type="ECO:0000255" key="1">
    <source>
        <dbReference type="HAMAP-Rule" id="MF_01601"/>
    </source>
</evidence>
<protein>
    <recommendedName>
        <fullName evidence="1">ADP-L-glycero-D-manno-heptose-6-epimerase</fullName>
        <ecNumber evidence="1">5.1.3.20</ecNumber>
    </recommendedName>
    <alternativeName>
        <fullName evidence="1">ADP-L-glycero-beta-D-manno-heptose-6-epimerase</fullName>
        <shortName evidence="1">ADP-glyceromanno-heptose 6-epimerase</shortName>
        <shortName evidence="1">ADP-hep 6-epimerase</shortName>
        <shortName evidence="1">AGME</shortName>
    </alternativeName>
</protein>
<sequence>MIVVTGAAGFIGSNLVRGLNRRGIQDIIAVDDLTDGDKFRNLVDCSIADYLDKDEFRERVRGGNLPALRAVLHQGACSDTTERNGRYMLDNNYRVTLELFEYCQAERVPFLYASSAAVYGGSSVYVEDPANEHPLNVYGYSKLLFDQVLRTRMDSLTAQVVGLRYFNVYGPHEQHKGRMASVAFHNMNQFLAEGHVRLFAGWDGYEDGGQSRDFISVEDVVAVNLHFLDNPDQSGVFNCGTGRAQPFNDVAAAVVNTLRAERGEAALPLAELVKKGLLRYIPFPDDLKGRYQSYTQADVSRLRATGFSAPMRDVQTGVSEYVRYWRALK</sequence>
<reference key="1">
    <citation type="journal article" date="2003" name="Nat. Genet.">
        <title>Comparative analysis of the genome sequences of Bordetella pertussis, Bordetella parapertussis and Bordetella bronchiseptica.</title>
        <authorList>
            <person name="Parkhill J."/>
            <person name="Sebaihia M."/>
            <person name="Preston A."/>
            <person name="Murphy L.D."/>
            <person name="Thomson N.R."/>
            <person name="Harris D.E."/>
            <person name="Holden M.T.G."/>
            <person name="Churcher C.M."/>
            <person name="Bentley S.D."/>
            <person name="Mungall K.L."/>
            <person name="Cerdeno-Tarraga A.-M."/>
            <person name="Temple L."/>
            <person name="James K.D."/>
            <person name="Harris B."/>
            <person name="Quail M.A."/>
            <person name="Achtman M."/>
            <person name="Atkin R."/>
            <person name="Baker S."/>
            <person name="Basham D."/>
            <person name="Bason N."/>
            <person name="Cherevach I."/>
            <person name="Chillingworth T."/>
            <person name="Collins M."/>
            <person name="Cronin A."/>
            <person name="Davis P."/>
            <person name="Doggett J."/>
            <person name="Feltwell T."/>
            <person name="Goble A."/>
            <person name="Hamlin N."/>
            <person name="Hauser H."/>
            <person name="Holroyd S."/>
            <person name="Jagels K."/>
            <person name="Leather S."/>
            <person name="Moule S."/>
            <person name="Norberczak H."/>
            <person name="O'Neil S."/>
            <person name="Ormond D."/>
            <person name="Price C."/>
            <person name="Rabbinowitsch E."/>
            <person name="Rutter S."/>
            <person name="Sanders M."/>
            <person name="Saunders D."/>
            <person name="Seeger K."/>
            <person name="Sharp S."/>
            <person name="Simmonds M."/>
            <person name="Skelton J."/>
            <person name="Squares R."/>
            <person name="Squares S."/>
            <person name="Stevens K."/>
            <person name="Unwin L."/>
            <person name="Whitehead S."/>
            <person name="Barrell B.G."/>
            <person name="Maskell D.J."/>
        </authorList>
    </citation>
    <scope>NUCLEOTIDE SEQUENCE [LARGE SCALE GENOMIC DNA]</scope>
    <source>
        <strain>Tohama I / ATCC BAA-589 / NCTC 13251</strain>
    </source>
</reference>
<keyword id="KW-0119">Carbohydrate metabolism</keyword>
<keyword id="KW-0413">Isomerase</keyword>
<keyword id="KW-0521">NADP</keyword>
<keyword id="KW-1185">Reference proteome</keyword>
<gene>
    <name evidence="1" type="primary">hldD</name>
    <name type="synonym">htrM</name>
    <name type="synonym">rfaD</name>
    <name type="ordered locus">BP0955</name>
</gene>